<feature type="chain" id="PRO_0000437106" description="FAD-dependent monooxygenase mdpD">
    <location>
        <begin position="1"/>
        <end position="521"/>
    </location>
</feature>
<feature type="region of interest" description="Disordered" evidence="4">
    <location>
        <begin position="1"/>
        <end position="48"/>
    </location>
</feature>
<feature type="compositionally biased region" description="Basic and acidic residues" evidence="4">
    <location>
        <begin position="11"/>
        <end position="21"/>
    </location>
</feature>
<feature type="compositionally biased region" description="Polar residues" evidence="4">
    <location>
        <begin position="23"/>
        <end position="48"/>
    </location>
</feature>
<feature type="active site" evidence="2">
    <location>
        <position position="244"/>
    </location>
</feature>
<feature type="active site" evidence="1">
    <location>
        <position position="271"/>
    </location>
</feature>
<feature type="binding site" evidence="1">
    <location>
        <position position="94"/>
    </location>
    <ligand>
        <name>FAD</name>
        <dbReference type="ChEBI" id="CHEBI:57692"/>
    </ligand>
</feature>
<feature type="binding site" evidence="1">
    <location>
        <position position="160"/>
    </location>
    <ligand>
        <name>FAD</name>
        <dbReference type="ChEBI" id="CHEBI:57692"/>
    </ligand>
</feature>
<feature type="binding site" evidence="1">
    <location>
        <position position="369"/>
    </location>
    <ligand>
        <name>FAD</name>
        <dbReference type="ChEBI" id="CHEBI:57692"/>
    </ligand>
</feature>
<feature type="binding site" evidence="1">
    <location>
        <position position="382"/>
    </location>
    <ligand>
        <name>FAD</name>
        <dbReference type="ChEBI" id="CHEBI:57692"/>
    </ligand>
</feature>
<name>MDPD_EMENI</name>
<comment type="function">
    <text evidence="3 5 6 7">FAD-dependent monooxygenase; part of the gene cluster that mediates the biosynthesis of monodictyphenone, a prenyl xanthone derivative (PubMed:20139316, PubMed:21351751, PubMed:22730213). The pathway begins with the synthesis of atrochrysone thioester by the polyketide synthase (PKS) mdpG (PubMed:20139316). The atrochrysone carboxyl ACP thioesterase mdpF then breaks the thioester bond and releases the atrochrysone carboxylic acid from mdpG (PubMed:20139316). The atrochrysone carboxylic acid is then converted to atrochrysone which is further transformed into emodin anthrone (PubMed:20139316). The next step is performed by the anthrone oxygenase mdpH that catalyzes the oxidation of emodinanthrone to emodin (By similarity). Emodin is further modified to yield monodictyphenone via several steps involving mdpB, mdpC mdpJ, mdpK and mdpL (PubMed:20139316, PubMed:21351751). These enzymes with xptA, xptB and xptC are also proposed to be involved in the synthesis of shamixanthone from emodin (PubMed:22730213). Especially, direct reduction of emodin by the short chain dehydrogenase mdpC followed by dehydration catalyzed by the scytalone dehydratase-like protein mdpB gives loss of oxygen and formation of chrysophanol intermediate in two simple steps (PubMed:22730213).</text>
</comment>
<comment type="cofactor">
    <cofactor evidence="9">
        <name>FAD</name>
        <dbReference type="ChEBI" id="CHEBI:57692"/>
    </cofactor>
</comment>
<comment type="pathway">
    <text evidence="5 6 7">Secondary metabolite biosynthesis.</text>
</comment>
<comment type="disruption phenotype">
    <text evidence="5 6 7">Impairs the production of monodictyphenone, but still enables the synthesis of intermediates until emodin.</text>
</comment>
<comment type="similarity">
    <text evidence="9">Belongs to the paxM FAD-dependent monooxygenase family.</text>
</comment>
<proteinExistence type="inferred from homology"/>
<gene>
    <name evidence="8" type="primary">mdpD</name>
    <name type="ORF">AN0147</name>
</gene>
<organism>
    <name type="scientific">Emericella nidulans (strain FGSC A4 / ATCC 38163 / CBS 112.46 / NRRL 194 / M139)</name>
    <name type="common">Aspergillus nidulans</name>
    <dbReference type="NCBI Taxonomy" id="227321"/>
    <lineage>
        <taxon>Eukaryota</taxon>
        <taxon>Fungi</taxon>
        <taxon>Dikarya</taxon>
        <taxon>Ascomycota</taxon>
        <taxon>Pezizomycotina</taxon>
        <taxon>Eurotiomycetes</taxon>
        <taxon>Eurotiomycetidae</taxon>
        <taxon>Eurotiales</taxon>
        <taxon>Aspergillaceae</taxon>
        <taxon>Aspergillus</taxon>
        <taxon>Aspergillus subgen. Nidulantes</taxon>
    </lineage>
</organism>
<protein>
    <recommendedName>
        <fullName evidence="8">FAD-dependent monooxygenase mdpD</fullName>
        <ecNumber evidence="10">1.-.-.-</ecNumber>
    </recommendedName>
    <alternativeName>
        <fullName evidence="8">Monodictyphenone synthesis protein D</fullName>
    </alternativeName>
</protein>
<sequence>MTHFPVNIASDKQEFDPERWAKTPTTESSVNGENGTAPTSGLPSRHPSTGISVLIVGAGMGGLMTALECWRKGHDVAGILERSEGPVYSGDIIVMQPSAVSIIRHWPDMLHDMKAEQVHAVVSYETHDGRHIYGPTVPSFNDPEHLETRKGPFVAPAQVRRKFYRMLLRQVARCGLRVEYGKTVKSYFEDEKDGKGGVIIATTGEAEVRVADIVVAADGLKSPSEILIAGQHVPPRSSGLSIYRTAFPKDLAMQNELVRKRWSDSPPIWEYWLGPGMYLGVFVGDDIISFGFTPRDDIVEGTATESWEPDTDPETVAQAMLSGAGDWDPAVLALIRSAPKGAIVHWPLLWRDLRREWTSPAGRVVQVGDSAHSFIPTSGNGGSQALEDAITLATCLQLAGSSQRAYLGTKIYNLLRYERVSCAQKMSFVNSQLKTGTDWDAIWKDPAKIRTRFPKWIFQHDPEAYAYEKFGEAFAHLLDGREFVNTNYPPGHEFRAWTVEEVWRNIADGKRVEDLLDGDWS</sequence>
<dbReference type="EC" id="1.-.-.-" evidence="10"/>
<dbReference type="EMBL" id="BN001308">
    <property type="protein sequence ID" value="CBF90103.1"/>
    <property type="molecule type" value="Genomic_DNA"/>
</dbReference>
<dbReference type="EMBL" id="AACD01000005">
    <property type="protein sequence ID" value="EAA66020.1"/>
    <property type="molecule type" value="Genomic_DNA"/>
</dbReference>
<dbReference type="RefSeq" id="XP_657751.1">
    <property type="nucleotide sequence ID" value="XM_652659.1"/>
</dbReference>
<dbReference type="SMR" id="Q5BH33"/>
<dbReference type="STRING" id="227321.Q5BH33"/>
<dbReference type="EnsemblFungi" id="CBF90103">
    <property type="protein sequence ID" value="CBF90103"/>
    <property type="gene ID" value="ANIA_00147"/>
</dbReference>
<dbReference type="KEGG" id="ani:ANIA_00147"/>
<dbReference type="VEuPathDB" id="FungiDB:AN0147"/>
<dbReference type="eggNOG" id="KOG2614">
    <property type="taxonomic scope" value="Eukaryota"/>
</dbReference>
<dbReference type="HOGENOM" id="CLU_009665_19_1_1"/>
<dbReference type="InParanoid" id="Q5BH33"/>
<dbReference type="OMA" id="ANESWVP"/>
<dbReference type="OrthoDB" id="16820at2759"/>
<dbReference type="Proteomes" id="UP000000560">
    <property type="component" value="Chromosome VIII"/>
</dbReference>
<dbReference type="GO" id="GO:0071949">
    <property type="term" value="F:FAD binding"/>
    <property type="evidence" value="ECO:0007669"/>
    <property type="project" value="InterPro"/>
</dbReference>
<dbReference type="GO" id="GO:0004497">
    <property type="term" value="F:monooxygenase activity"/>
    <property type="evidence" value="ECO:0000318"/>
    <property type="project" value="GO_Central"/>
</dbReference>
<dbReference type="GO" id="GO:1900815">
    <property type="term" value="P:monodictyphenone biosynthetic process"/>
    <property type="evidence" value="ECO:0000315"/>
    <property type="project" value="AspGD"/>
</dbReference>
<dbReference type="Gene3D" id="3.50.50.60">
    <property type="entry name" value="FAD/NAD(P)-binding domain"/>
    <property type="match status" value="1"/>
</dbReference>
<dbReference type="InterPro" id="IPR002938">
    <property type="entry name" value="FAD-bd"/>
</dbReference>
<dbReference type="InterPro" id="IPR050493">
    <property type="entry name" value="FAD-dep_Monooxygenase_BioMet"/>
</dbReference>
<dbReference type="InterPro" id="IPR036188">
    <property type="entry name" value="FAD/NAD-bd_sf"/>
</dbReference>
<dbReference type="PANTHER" id="PTHR13789:SF315">
    <property type="entry name" value="FAD-DEPENDENT MONOOXYGENASE MDPD"/>
    <property type="match status" value="1"/>
</dbReference>
<dbReference type="PANTHER" id="PTHR13789">
    <property type="entry name" value="MONOOXYGENASE"/>
    <property type="match status" value="1"/>
</dbReference>
<dbReference type="Pfam" id="PF01494">
    <property type="entry name" value="FAD_binding_3"/>
    <property type="match status" value="1"/>
</dbReference>
<dbReference type="PRINTS" id="PR00420">
    <property type="entry name" value="RNGMNOXGNASE"/>
</dbReference>
<dbReference type="SUPFAM" id="SSF51905">
    <property type="entry name" value="FAD/NAD(P)-binding domain"/>
    <property type="match status" value="1"/>
</dbReference>
<accession>Q5BH33</accession>
<accession>C8VQ69</accession>
<reference key="1">
    <citation type="journal article" date="2005" name="Nature">
        <title>Sequencing of Aspergillus nidulans and comparative analysis with A. fumigatus and A. oryzae.</title>
        <authorList>
            <person name="Galagan J.E."/>
            <person name="Calvo S.E."/>
            <person name="Cuomo C."/>
            <person name="Ma L.-J."/>
            <person name="Wortman J.R."/>
            <person name="Batzoglou S."/>
            <person name="Lee S.-I."/>
            <person name="Bastuerkmen M."/>
            <person name="Spevak C.C."/>
            <person name="Clutterbuck J."/>
            <person name="Kapitonov V."/>
            <person name="Jurka J."/>
            <person name="Scazzocchio C."/>
            <person name="Farman M.L."/>
            <person name="Butler J."/>
            <person name="Purcell S."/>
            <person name="Harris S."/>
            <person name="Braus G.H."/>
            <person name="Draht O."/>
            <person name="Busch S."/>
            <person name="D'Enfert C."/>
            <person name="Bouchier C."/>
            <person name="Goldman G.H."/>
            <person name="Bell-Pedersen D."/>
            <person name="Griffiths-Jones S."/>
            <person name="Doonan J.H."/>
            <person name="Yu J."/>
            <person name="Vienken K."/>
            <person name="Pain A."/>
            <person name="Freitag M."/>
            <person name="Selker E.U."/>
            <person name="Archer D.B."/>
            <person name="Penalva M.A."/>
            <person name="Oakley B.R."/>
            <person name="Momany M."/>
            <person name="Tanaka T."/>
            <person name="Kumagai T."/>
            <person name="Asai K."/>
            <person name="Machida M."/>
            <person name="Nierman W.C."/>
            <person name="Denning D.W."/>
            <person name="Caddick M.X."/>
            <person name="Hynes M."/>
            <person name="Paoletti M."/>
            <person name="Fischer R."/>
            <person name="Miller B.L."/>
            <person name="Dyer P.S."/>
            <person name="Sachs M.S."/>
            <person name="Osmani S.A."/>
            <person name="Birren B.W."/>
        </authorList>
    </citation>
    <scope>NUCLEOTIDE SEQUENCE [LARGE SCALE GENOMIC DNA]</scope>
    <source>
        <strain>FGSC A4 / ATCC 38163 / CBS 112.46 / NRRL 194 / M139</strain>
    </source>
</reference>
<reference key="2">
    <citation type="journal article" date="2009" name="Fungal Genet. Biol.">
        <title>The 2008 update of the Aspergillus nidulans genome annotation: a community effort.</title>
        <authorList>
            <person name="Wortman J.R."/>
            <person name="Gilsenan J.M."/>
            <person name="Joardar V."/>
            <person name="Deegan J."/>
            <person name="Clutterbuck J."/>
            <person name="Andersen M.R."/>
            <person name="Archer D."/>
            <person name="Bencina M."/>
            <person name="Braus G."/>
            <person name="Coutinho P."/>
            <person name="von Dohren H."/>
            <person name="Doonan J."/>
            <person name="Driessen A.J."/>
            <person name="Durek P."/>
            <person name="Espeso E."/>
            <person name="Fekete E."/>
            <person name="Flipphi M."/>
            <person name="Estrada C.G."/>
            <person name="Geysens S."/>
            <person name="Goldman G."/>
            <person name="de Groot P.W."/>
            <person name="Hansen K."/>
            <person name="Harris S.D."/>
            <person name="Heinekamp T."/>
            <person name="Helmstaedt K."/>
            <person name="Henrissat B."/>
            <person name="Hofmann G."/>
            <person name="Homan T."/>
            <person name="Horio T."/>
            <person name="Horiuchi H."/>
            <person name="James S."/>
            <person name="Jones M."/>
            <person name="Karaffa L."/>
            <person name="Karanyi Z."/>
            <person name="Kato M."/>
            <person name="Keller N."/>
            <person name="Kelly D.E."/>
            <person name="Kiel J.A."/>
            <person name="Kim J.M."/>
            <person name="van der Klei I.J."/>
            <person name="Klis F.M."/>
            <person name="Kovalchuk A."/>
            <person name="Krasevec N."/>
            <person name="Kubicek C.P."/>
            <person name="Liu B."/>
            <person name="Maccabe A."/>
            <person name="Meyer V."/>
            <person name="Mirabito P."/>
            <person name="Miskei M."/>
            <person name="Mos M."/>
            <person name="Mullins J."/>
            <person name="Nelson D.R."/>
            <person name="Nielsen J."/>
            <person name="Oakley B.R."/>
            <person name="Osmani S.A."/>
            <person name="Pakula T."/>
            <person name="Paszewski A."/>
            <person name="Paulsen I."/>
            <person name="Pilsyk S."/>
            <person name="Pocsi I."/>
            <person name="Punt P.J."/>
            <person name="Ram A.F."/>
            <person name="Ren Q."/>
            <person name="Robellet X."/>
            <person name="Robson G."/>
            <person name="Seiboth B."/>
            <person name="van Solingen P."/>
            <person name="Specht T."/>
            <person name="Sun J."/>
            <person name="Taheri-Talesh N."/>
            <person name="Takeshita N."/>
            <person name="Ussery D."/>
            <person name="vanKuyk P.A."/>
            <person name="Visser H."/>
            <person name="van de Vondervoort P.J."/>
            <person name="de Vries R.P."/>
            <person name="Walton J."/>
            <person name="Xiang X."/>
            <person name="Xiong Y."/>
            <person name="Zeng A.P."/>
            <person name="Brandt B.W."/>
            <person name="Cornell M.J."/>
            <person name="van den Hondel C.A."/>
            <person name="Visser J."/>
            <person name="Oliver S.G."/>
            <person name="Turner G."/>
        </authorList>
    </citation>
    <scope>GENOME REANNOTATION</scope>
    <source>
        <strain>FGSC A4 / ATCC 38163 / CBS 112.46 / NRRL 194 / M139</strain>
    </source>
</reference>
<reference key="3">
    <citation type="journal article" date="2010" name="Appl. Environ. Microbiol.">
        <title>Characterization of the Aspergillus nidulans monodictyphenone gene cluster.</title>
        <authorList>
            <person name="Chiang Y.M."/>
            <person name="Szewczyk E."/>
            <person name="Davidson A.D."/>
            <person name="Entwistle R."/>
            <person name="Keller N.P."/>
            <person name="Wang C.C."/>
            <person name="Oakley B.R."/>
        </authorList>
    </citation>
    <scope>FUNCTION</scope>
    <scope>DISRUPTION PHENOTYPE</scope>
    <scope>PATHWAY</scope>
</reference>
<reference key="4">
    <citation type="journal article" date="2011" name="J. Am. Chem. Soc.">
        <title>Genome-based deletion analysis reveals the prenyl xanthone biosynthesis pathway in Aspergillus nidulans.</title>
        <authorList>
            <person name="Sanchez J.F."/>
            <person name="Entwistle R."/>
            <person name="Hung J.H."/>
            <person name="Yaegashi J."/>
            <person name="Jain S."/>
            <person name="Chiang Y.M."/>
            <person name="Wang C.C."/>
            <person name="Oakley B.R."/>
        </authorList>
    </citation>
    <scope>FUNCTION</scope>
    <scope>DISRUPTION PHENOTYPE</scope>
    <scope>PATHWAY</scope>
</reference>
<reference key="5">
    <citation type="journal article" date="2012" name="ChemBioChem">
        <title>Genetic and biosynthetic studies of the fungal prenylated xanthone shamixanthone and related metabolites in Aspergillus spp. revisited.</title>
        <authorList>
            <person name="Simpson T.J."/>
        </authorList>
    </citation>
    <scope>FUNCTION</scope>
    <scope>DISRUPTION PHENOTYPE</scope>
    <scope>PATHWAY</scope>
</reference>
<keyword id="KW-0274">FAD</keyword>
<keyword id="KW-0285">Flavoprotein</keyword>
<keyword id="KW-0503">Monooxygenase</keyword>
<keyword id="KW-0560">Oxidoreductase</keyword>
<keyword id="KW-1185">Reference proteome</keyword>
<evidence type="ECO:0000250" key="1">
    <source>
        <dbReference type="UniProtKB" id="B8M9J8"/>
    </source>
</evidence>
<evidence type="ECO:0000250" key="2">
    <source>
        <dbReference type="UniProtKB" id="L0E4H0"/>
    </source>
</evidence>
<evidence type="ECO:0000250" key="3">
    <source>
        <dbReference type="UniProtKB" id="Q0CCY3"/>
    </source>
</evidence>
<evidence type="ECO:0000256" key="4">
    <source>
        <dbReference type="SAM" id="MobiDB-lite"/>
    </source>
</evidence>
<evidence type="ECO:0000269" key="5">
    <source>
    </source>
</evidence>
<evidence type="ECO:0000269" key="6">
    <source>
    </source>
</evidence>
<evidence type="ECO:0000269" key="7">
    <source>
    </source>
</evidence>
<evidence type="ECO:0000303" key="8">
    <source>
    </source>
</evidence>
<evidence type="ECO:0000305" key="9"/>
<evidence type="ECO:0000305" key="10">
    <source>
    </source>
</evidence>